<sequence length="398" mass="40909">MSSLPAVYIVSSARTPVGSFLGSLSSLTAPQLGAHAIKAALAKVDGLKPSDVQEVFFGNVISANVGQNPARQCALGAGLEESTICTTVNKVCASGLKAIILGAQTIMTGNADVVVAGGTESMSNAPHYLPNLRTGAKYGHQSLVDGIMKDGLTDAGKQELMGLQAEECAQDHGFSREQQDEYAIRTYEKAQAAQKAGLFDEEIAPIQLPGFRGKPDVTVTQDEEPKNLNPEKLRAIKPAFIPGSGTVTAPNSSPLNDGAAAVVLVSEAKLKELNLKPVAKILGWGDAAQQPSKFTTAPALAIPKALKHAGVGQDAIDAFEINEAFSVVALANMKLLGIPEEKVNLHGGAVAIGHPIGASGARILTTLLGVLKAKKGKLGCAGICNGGGGASALVVELL</sequence>
<gene>
    <name evidence="10" type="primary">erg10B</name>
    <name type="ORF">AFUB_083570</name>
</gene>
<comment type="function">
    <text evidence="5 6 7 13">Acetyl-CoA acetyltransferase; part of the first module of ergosterol biosynthesis pathway that includes the early steps of the pathway, conserved across all eukaryotes, and which results in the formation of mevalonate from acetyl-coenzyme A (acetyl-CoA) (Probable) (PubMed:32005728). In this module, the cytosolic acetyl-CoA acetyltransferase erg10B catalyzes the formation of acetoacetyl-CoA (PubMed:32005728). The hydroxymethylglutaryl-CoA synthases AFUA_8G07210 and AFUA_3G10660 then condense acetyl-CoA with acetoacetyl-CoA to form HMG-CoA (Probable). The rate-limiting step of the early module is the reduction to mevalonate by the 3-hydroxy-3-methylglutaryl-coenzyme A (HMG-CoA) reductases hmg1 and hmg2 (PubMed:22106303, PubMed:30940706). Mevalonate is also a precursor for the extracellular siderophore triacetylfusarinine C (TAFC) (PubMed:22106303).</text>
</comment>
<comment type="catalytic activity">
    <reaction evidence="3 8">
        <text>2 acetyl-CoA = acetoacetyl-CoA + CoA</text>
        <dbReference type="Rhea" id="RHEA:21036"/>
        <dbReference type="ChEBI" id="CHEBI:57286"/>
        <dbReference type="ChEBI" id="CHEBI:57287"/>
        <dbReference type="ChEBI" id="CHEBI:57288"/>
        <dbReference type="EC" id="2.3.1.9"/>
    </reaction>
    <physiologicalReaction direction="left-to-right" evidence="8">
        <dbReference type="Rhea" id="RHEA:21037"/>
    </physiologicalReaction>
</comment>
<comment type="cofactor">
    <cofactor evidence="8">
        <name>K(+)</name>
        <dbReference type="ChEBI" id="CHEBI:29103"/>
    </cofactor>
</comment>
<comment type="activity regulation">
    <text evidence="8">Activity is increased by monovalent cations such as K(+), Rb(+) or Cs(+).</text>
</comment>
<comment type="biophysicochemical properties">
    <kinetics>
        <KM evidence="8">42 uM for acetoacetyl-CoA (in law salt conditions)</KM>
        <KM evidence="8">8 uM for acetoacetyl-CoA (in the presence of 100 mM NaCl)</KM>
        <KM evidence="8">8 uM for acetoacetyl-CoA (in the presence of 100 mM KCl)</KM>
    </kinetics>
</comment>
<comment type="pathway">
    <text evidence="8">Metabolic intermediate biosynthesis; (R)-mevalonate biosynthesis; (R)-mevalonate from acetyl-CoA: step 1/3.</text>
</comment>
<comment type="subunit">
    <text evidence="8">Homotetramer.</text>
</comment>
<comment type="subcellular location">
    <subcellularLocation>
        <location evidence="14">Cytoplasm</location>
        <location evidence="14">Cytosol</location>
    </subcellularLocation>
</comment>
<comment type="disruption phenotype">
    <text evidence="4 7">Leads to lethality.</text>
</comment>
<comment type="miscellaneous">
    <text evidence="2">Even though it is not involved in catalysis directly, the Cl(-) anion stabilizes the catalytic site via both direct and water-mediated hydrogen bonds to catalytic residues and residues adjacent.</text>
</comment>
<comment type="similarity">
    <text evidence="12">Belongs to the thiolase-like superfamily. Thiolase family.</text>
</comment>
<proteinExistence type="evidence at protein level"/>
<dbReference type="EC" id="2.3.1.9" evidence="8"/>
<dbReference type="EMBL" id="DS499600">
    <property type="protein sequence ID" value="EDP48908.1"/>
    <property type="molecule type" value="Genomic_DNA"/>
</dbReference>
<dbReference type="SMR" id="B0YA65"/>
<dbReference type="EnsemblFungi" id="EDP48908">
    <property type="protein sequence ID" value="EDP48908"/>
    <property type="gene ID" value="AFUB_083570"/>
</dbReference>
<dbReference type="VEuPathDB" id="FungiDB:AFUB_083570"/>
<dbReference type="HOGENOM" id="CLU_031026_0_1_1"/>
<dbReference type="OrthoDB" id="64607at5052"/>
<dbReference type="PhylomeDB" id="B0YA65"/>
<dbReference type="UniPathway" id="UPA00058">
    <property type="reaction ID" value="UER00101"/>
</dbReference>
<dbReference type="Proteomes" id="UP000001699">
    <property type="component" value="Unassembled WGS sequence"/>
</dbReference>
<dbReference type="GO" id="GO:0005829">
    <property type="term" value="C:cytosol"/>
    <property type="evidence" value="ECO:0007669"/>
    <property type="project" value="UniProtKB-SubCell"/>
</dbReference>
<dbReference type="GO" id="GO:0005739">
    <property type="term" value="C:mitochondrion"/>
    <property type="evidence" value="ECO:0007669"/>
    <property type="project" value="TreeGrafter"/>
</dbReference>
<dbReference type="GO" id="GO:0003985">
    <property type="term" value="F:acetyl-CoA C-acetyltransferase activity"/>
    <property type="evidence" value="ECO:0007669"/>
    <property type="project" value="TreeGrafter"/>
</dbReference>
<dbReference type="GO" id="GO:0046872">
    <property type="term" value="F:metal ion binding"/>
    <property type="evidence" value="ECO:0007669"/>
    <property type="project" value="UniProtKB-KW"/>
</dbReference>
<dbReference type="GO" id="GO:0006696">
    <property type="term" value="P:ergosterol biosynthetic process"/>
    <property type="evidence" value="ECO:0007669"/>
    <property type="project" value="TreeGrafter"/>
</dbReference>
<dbReference type="GO" id="GO:0006635">
    <property type="term" value="P:fatty acid beta-oxidation"/>
    <property type="evidence" value="ECO:0007669"/>
    <property type="project" value="TreeGrafter"/>
</dbReference>
<dbReference type="CDD" id="cd00751">
    <property type="entry name" value="thiolase"/>
    <property type="match status" value="1"/>
</dbReference>
<dbReference type="FunFam" id="3.40.47.10:FF:000007">
    <property type="entry name" value="acetyl-CoA acetyltransferase, mitochondrial"/>
    <property type="match status" value="1"/>
</dbReference>
<dbReference type="Gene3D" id="3.40.47.10">
    <property type="match status" value="1"/>
</dbReference>
<dbReference type="InterPro" id="IPR002155">
    <property type="entry name" value="Thiolase"/>
</dbReference>
<dbReference type="InterPro" id="IPR016039">
    <property type="entry name" value="Thiolase-like"/>
</dbReference>
<dbReference type="InterPro" id="IPR020615">
    <property type="entry name" value="Thiolase_acyl_enz_int_AS"/>
</dbReference>
<dbReference type="InterPro" id="IPR020617">
    <property type="entry name" value="Thiolase_C"/>
</dbReference>
<dbReference type="InterPro" id="IPR020613">
    <property type="entry name" value="Thiolase_CS"/>
</dbReference>
<dbReference type="InterPro" id="IPR020616">
    <property type="entry name" value="Thiolase_N"/>
</dbReference>
<dbReference type="NCBIfam" id="TIGR01930">
    <property type="entry name" value="AcCoA-C-Actrans"/>
    <property type="match status" value="1"/>
</dbReference>
<dbReference type="PANTHER" id="PTHR18919:SF165">
    <property type="entry name" value="ACETYL-COA ACETYLTRANSFERASE"/>
    <property type="match status" value="1"/>
</dbReference>
<dbReference type="PANTHER" id="PTHR18919">
    <property type="entry name" value="ACETYL-COA C-ACYLTRANSFERASE"/>
    <property type="match status" value="1"/>
</dbReference>
<dbReference type="Pfam" id="PF02803">
    <property type="entry name" value="Thiolase_C"/>
    <property type="match status" value="1"/>
</dbReference>
<dbReference type="Pfam" id="PF00108">
    <property type="entry name" value="Thiolase_N"/>
    <property type="match status" value="1"/>
</dbReference>
<dbReference type="PIRSF" id="PIRSF000429">
    <property type="entry name" value="Ac-CoA_Ac_transf"/>
    <property type="match status" value="1"/>
</dbReference>
<dbReference type="SUPFAM" id="SSF53901">
    <property type="entry name" value="Thiolase-like"/>
    <property type="match status" value="2"/>
</dbReference>
<dbReference type="PROSITE" id="PS00098">
    <property type="entry name" value="THIOLASE_1"/>
    <property type="match status" value="1"/>
</dbReference>
<dbReference type="PROSITE" id="PS00737">
    <property type="entry name" value="THIOLASE_2"/>
    <property type="match status" value="1"/>
</dbReference>
<keyword id="KW-0012">Acyltransferase</keyword>
<keyword id="KW-0963">Cytoplasm</keyword>
<keyword id="KW-0444">Lipid biosynthesis</keyword>
<keyword id="KW-0443">Lipid metabolism</keyword>
<keyword id="KW-0479">Metal-binding</keyword>
<keyword id="KW-0630">Potassium</keyword>
<keyword id="KW-0752">Steroid biosynthesis</keyword>
<keyword id="KW-0753">Steroid metabolism</keyword>
<keyword id="KW-0756">Sterol biosynthesis</keyword>
<keyword id="KW-1207">Sterol metabolism</keyword>
<keyword id="KW-0808">Transferase</keyword>
<accession>B0YA65</accession>
<organism>
    <name type="scientific">Aspergillus fumigatus (strain CBS 144.89 / FGSC A1163 / CEA10)</name>
    <name type="common">Neosartorya fumigata</name>
    <dbReference type="NCBI Taxonomy" id="451804"/>
    <lineage>
        <taxon>Eukaryota</taxon>
        <taxon>Fungi</taxon>
        <taxon>Dikarya</taxon>
        <taxon>Ascomycota</taxon>
        <taxon>Pezizomycotina</taxon>
        <taxon>Eurotiomycetes</taxon>
        <taxon>Eurotiomycetidae</taxon>
        <taxon>Eurotiales</taxon>
        <taxon>Aspergillaceae</taxon>
        <taxon>Aspergillus</taxon>
        <taxon>Aspergillus subgen. Fumigati</taxon>
    </lineage>
</organism>
<name>ER10B_ASPFC</name>
<protein>
    <recommendedName>
        <fullName evidence="11">Acetyl-CoA acetyltransferase erg10B, cytosolic</fullName>
        <ecNumber evidence="8">2.3.1.9</ecNumber>
    </recommendedName>
    <alternativeName>
        <fullName evidence="11">Acetoacetyl-CoA thiolase erg10B</fullName>
        <shortName evidence="11">ACAT</shortName>
    </alternativeName>
    <alternativeName>
        <fullName evidence="11">Cytosolic thiolase erg10B</fullName>
        <shortName evidence="11">CT</shortName>
    </alternativeName>
    <alternativeName>
        <fullName evidence="9">Ergosterol biosynthesis protein 10B</fullName>
    </alternativeName>
</protein>
<evidence type="ECO:0000250" key="1">
    <source>
        <dbReference type="UniProtKB" id="P24752"/>
    </source>
</evidence>
<evidence type="ECO:0000250" key="2">
    <source>
        <dbReference type="UniProtKB" id="Q4WCL5"/>
    </source>
</evidence>
<evidence type="ECO:0000255" key="3">
    <source>
        <dbReference type="PROSITE-ProRule" id="PRU10020"/>
    </source>
</evidence>
<evidence type="ECO:0000269" key="4">
    <source>
    </source>
</evidence>
<evidence type="ECO:0000269" key="5">
    <source>
    </source>
</evidence>
<evidence type="ECO:0000269" key="6">
    <source>
    </source>
</evidence>
<evidence type="ECO:0000269" key="7">
    <source>
    </source>
</evidence>
<evidence type="ECO:0000269" key="8">
    <source ref="5"/>
</evidence>
<evidence type="ECO:0000303" key="9">
    <source>
    </source>
</evidence>
<evidence type="ECO:0000303" key="10">
    <source>
    </source>
</evidence>
<evidence type="ECO:0000303" key="11">
    <source ref="5"/>
</evidence>
<evidence type="ECO:0000305" key="12"/>
<evidence type="ECO:0000305" key="13">
    <source>
    </source>
</evidence>
<evidence type="ECO:0000305" key="14">
    <source>
    </source>
</evidence>
<feature type="chain" id="PRO_0000454147" description="Acetyl-CoA acetyltransferase erg10B, cytosolic">
    <location>
        <begin position="1"/>
        <end position="398"/>
    </location>
</feature>
<feature type="active site" description="Acyl-thioester intermediate" evidence="1">
    <location>
        <position position="92"/>
    </location>
</feature>
<feature type="active site" description="Proton acceptor" evidence="3">
    <location>
        <position position="354"/>
    </location>
</feature>
<feature type="active site" description="Proton acceptor" evidence="3">
    <location>
        <position position="384"/>
    </location>
</feature>
<feature type="binding site" evidence="2">
    <location>
        <position position="187"/>
    </location>
    <ligand>
        <name>K(+)</name>
        <dbReference type="ChEBI" id="CHEBI:29103"/>
    </ligand>
</feature>
<feature type="binding site" evidence="2">
    <location>
        <position position="229"/>
    </location>
    <ligand>
        <name>CoA</name>
        <dbReference type="ChEBI" id="CHEBI:57287"/>
    </ligand>
</feature>
<feature type="binding site" evidence="2">
    <location>
        <position position="232"/>
    </location>
    <ligand>
        <name>CoA</name>
        <dbReference type="ChEBI" id="CHEBI:57287"/>
    </ligand>
</feature>
<feature type="binding site" evidence="2">
    <location>
        <position position="249"/>
    </location>
    <ligand>
        <name>K(+)</name>
        <dbReference type="ChEBI" id="CHEBI:29103"/>
    </ligand>
</feature>
<feature type="binding site" evidence="2">
    <location>
        <position position="250"/>
    </location>
    <ligand>
        <name>K(+)</name>
        <dbReference type="ChEBI" id="CHEBI:29103"/>
    </ligand>
</feature>
<feature type="binding site" evidence="2">
    <location>
        <position position="252"/>
    </location>
    <ligand>
        <name>K(+)</name>
        <dbReference type="ChEBI" id="CHEBI:29103"/>
    </ligand>
</feature>
<feature type="binding site" evidence="2">
    <location>
        <position position="253"/>
    </location>
    <ligand>
        <name>CoA</name>
        <dbReference type="ChEBI" id="CHEBI:57287"/>
    </ligand>
</feature>
<feature type="binding site" evidence="2">
    <location>
        <position position="350"/>
    </location>
    <ligand>
        <name>K(+)</name>
        <dbReference type="ChEBI" id="CHEBI:29103"/>
    </ligand>
</feature>
<feature type="binding site" evidence="2">
    <location>
        <position position="385"/>
    </location>
    <ligand>
        <name>chloride</name>
        <dbReference type="ChEBI" id="CHEBI:17996"/>
    </ligand>
</feature>
<reference key="1">
    <citation type="journal article" date="2008" name="PLoS Genet.">
        <title>Genomic islands in the pathogenic filamentous fungus Aspergillus fumigatus.</title>
        <authorList>
            <person name="Fedorova N.D."/>
            <person name="Khaldi N."/>
            <person name="Joardar V.S."/>
            <person name="Maiti R."/>
            <person name="Amedeo P."/>
            <person name="Anderson M.J."/>
            <person name="Crabtree J."/>
            <person name="Silva J.C."/>
            <person name="Badger J.H."/>
            <person name="Albarraq A."/>
            <person name="Angiuoli S."/>
            <person name="Bussey H."/>
            <person name="Bowyer P."/>
            <person name="Cotty P.J."/>
            <person name="Dyer P.S."/>
            <person name="Egan A."/>
            <person name="Galens K."/>
            <person name="Fraser-Liggett C.M."/>
            <person name="Haas B.J."/>
            <person name="Inman J.M."/>
            <person name="Kent R."/>
            <person name="Lemieux S."/>
            <person name="Malavazi I."/>
            <person name="Orvis J."/>
            <person name="Roemer T."/>
            <person name="Ronning C.M."/>
            <person name="Sundaram J.P."/>
            <person name="Sutton G."/>
            <person name="Turner G."/>
            <person name="Venter J.C."/>
            <person name="White O.R."/>
            <person name="Whitty B.R."/>
            <person name="Youngman P."/>
            <person name="Wolfe K.H."/>
            <person name="Goldman G.H."/>
            <person name="Wortman J.R."/>
            <person name="Jiang B."/>
            <person name="Denning D.W."/>
            <person name="Nierman W.C."/>
        </authorList>
    </citation>
    <scope>NUCLEOTIDE SEQUENCE [LARGE SCALE GENOMIC DNA]</scope>
    <source>
        <strain>CBS 144.89 / FGSC A1163 / CEA10</strain>
    </source>
</reference>
<reference key="2">
    <citation type="journal article" date="2005" name="Med. Mycol.">
        <title>The ergosterol biosynthesis pathway, transporter genes, and azole resistance in Aspergillus fumigatus.</title>
        <authorList>
            <person name="Ferreira M.E."/>
            <person name="Colombo A.L."/>
            <person name="Paulsen I."/>
            <person name="Ren Q."/>
            <person name="Wortman J."/>
            <person name="Huang J."/>
            <person name="Goldman M.H."/>
            <person name="Goldman G.H."/>
        </authorList>
    </citation>
    <scope>IDENTIFICATION</scope>
    <scope>FUNCTION</scope>
</reference>
<reference key="3">
    <citation type="journal article" date="2007" name="PLoS Pathog.">
        <title>Essential gene identification and drug target prioritization in Aspergillus fumigatus.</title>
        <authorList>
            <person name="Hu W."/>
            <person name="Sillaots S."/>
            <person name="Lemieux S."/>
            <person name="Davison J."/>
            <person name="Kauffman S."/>
            <person name="Breton A."/>
            <person name="Linteau A."/>
            <person name="Xin C."/>
            <person name="Bowman J."/>
            <person name="Becker J."/>
            <person name="Jiang B."/>
            <person name="Roemer T."/>
        </authorList>
    </citation>
    <scope>DISRUPTION PHENOTYPE</scope>
</reference>
<reference key="4">
    <citation type="journal article" date="2012" name="Proc. Natl. Acad. Sci. U.S.A.">
        <title>Mevalonate governs interdependency of ergosterol and siderophore biosyntheses in the fungal pathogen Aspergillus fumigatus.</title>
        <authorList>
            <person name="Yasmin S."/>
            <person name="Alcazar-Fuoli L."/>
            <person name="Gruendlinger M."/>
            <person name="Puempel T."/>
            <person name="Cairns T."/>
            <person name="Blatzer M."/>
            <person name="Lopez J.F."/>
            <person name="Grimalt J.O."/>
            <person name="Bignell E."/>
            <person name="Haas H."/>
        </authorList>
    </citation>
    <scope>FUNCTION</scope>
</reference>
<reference key="5">
    <citation type="journal article" date="2018" name="ACS Catal.">
        <title>Structure of Aspergillus fumigatus cytosolic thiolase: trapped tetrahedral reaction intermediates and activation by monovalent cations.</title>
        <authorList>
            <person name="Marshall A.C."/>
            <person name="Bond C.S."/>
            <person name="Bruning J.B."/>
        </authorList>
    </citation>
    <scope>FUNCTION</scope>
    <scope>CATALYTIC ACTIVITY</scope>
    <scope>BIOPHYSICOCHEMICAL PROPERTIES</scope>
    <scope>COFACTOR</scope>
    <scope>ACTIVITY REGULATION</scope>
</reference>
<reference key="6">
    <citation type="journal article" date="2019" name="MBio">
        <title>Mutations in hmg1, challenging the paradigm of clinical triazole resistance in Aspergillus fumigatus.</title>
        <authorList>
            <person name="Rybak J.M."/>
            <person name="Ge W."/>
            <person name="Wiederhold N.P."/>
            <person name="Parker J.E."/>
            <person name="Kelly S.L."/>
            <person name="Rogers P.D."/>
            <person name="Fortwendel J.R."/>
        </authorList>
    </citation>
    <scope>FUNCTION</scope>
</reference>
<reference key="7">
    <citation type="journal article" date="2020" name="Appl. Environ. Microbiol.">
        <title>Characterization of Aspergillus fumigatus mitochondrial acetyl-CoA acetyltransferase as an antifungal target.</title>
        <authorList>
            <person name="Zhang Y."/>
            <person name="Wei W."/>
            <person name="Fan J."/>
            <person name="Jin C."/>
            <person name="Lu L."/>
            <person name="Fang W."/>
        </authorList>
    </citation>
    <scope>IDENTIFICATION</scope>
</reference>